<gene>
    <name type="ORF">ORF2</name>
</gene>
<keyword id="KW-1232">Capsid decoration protein</keyword>
<keyword id="KW-0167">Capsid protein</keyword>
<keyword id="KW-1035">Host cytoplasm</keyword>
<keyword id="KW-0946">Virion</keyword>
<proteinExistence type="inferred from homology"/>
<sequence>MSWIAGAMQGAGLLGDLAGTIGQIVLHNKQLNIMNSFNQAQIQLAKDQLKQNQQLANQYYEFNANLPVNQYNSAVSAGFDSVSARQLAGSREVRYLGGQQTPLVHQGQIHQMMFSPKHLMQAQHVVGTFSRGMPGVTPSKGLPRPQGVTAKVPVAGATTTHSKV</sequence>
<protein>
    <recommendedName>
        <fullName>Minor capsid protein VP2</fullName>
    </recommendedName>
</protein>
<dbReference type="EMBL" id="AF182760">
    <property type="protein sequence ID" value="AAF04561.1"/>
    <property type="molecule type" value="Genomic_RNA"/>
</dbReference>
<dbReference type="RefSeq" id="NP_051036.1">
    <property type="nucleotide sequence ID" value="NC_000940.1"/>
</dbReference>
<dbReference type="KEGG" id="vg:1457801"/>
<dbReference type="Proteomes" id="UP000166743">
    <property type="component" value="Segment"/>
</dbReference>
<dbReference type="GO" id="GO:0030430">
    <property type="term" value="C:host cell cytoplasm"/>
    <property type="evidence" value="ECO:0007669"/>
    <property type="project" value="UniProtKB-SubCell"/>
</dbReference>
<dbReference type="GO" id="GO:0098021">
    <property type="term" value="C:viral capsid, decoration"/>
    <property type="evidence" value="ECO:0007669"/>
    <property type="project" value="UniProtKB-KW"/>
</dbReference>
<dbReference type="InterPro" id="IPR008437">
    <property type="entry name" value="Minor_structural_calicivir"/>
</dbReference>
<dbReference type="Pfam" id="PF05752">
    <property type="entry name" value="Calici_MSP"/>
    <property type="match status" value="1"/>
</dbReference>
<evidence type="ECO:0000250" key="1">
    <source>
        <dbReference type="UniProtKB" id="P28711"/>
    </source>
</evidence>
<evidence type="ECO:0000305" key="2"/>
<feature type="chain" id="PRO_0000341651" description="Minor capsid protein VP2">
    <location>
        <begin position="1"/>
        <end position="164"/>
    </location>
</feature>
<accession>Q9QEJ4</accession>
<name>VP2_PESV</name>
<comment type="function">
    <text evidence="1">Minor structural protein that forms a portal-like structure at a unique three-fold axis of symmetry, following binding to the host receptor. The channel formed by VP2 may allow the delivery of the viral genome through the host endosomal membrane.</text>
</comment>
<comment type="subunit">
    <text evidence="1">Homooligomer. The portal-like structure consists in 12 copies of VP2. Interacts with capsid protein VP1.</text>
</comment>
<comment type="subcellular location">
    <subcellularLocation>
        <location evidence="1">Virion</location>
    </subcellularLocation>
    <subcellularLocation>
        <location evidence="2">Host cytoplasm</location>
    </subcellularLocation>
</comment>
<comment type="domain">
    <text evidence="1">The N-terminus domain points away from the virion surface.</text>
</comment>
<comment type="miscellaneous">
    <text evidence="1">Translated by a ribosomal termination-reinitiation process from the bicistronic mRNA coding for VP1 and VP2.</text>
</comment>
<comment type="similarity">
    <text evidence="2">Belongs to the sapovirus VP2 family.</text>
</comment>
<organism>
    <name type="scientific">Porcine enteric sapovirus (isolate Swine/United States/Cowden/1980)</name>
    <name type="common">Sw/SV/Cowden/1980/US</name>
    <dbReference type="NCBI Taxonomy" id="523795"/>
    <lineage>
        <taxon>Viruses</taxon>
        <taxon>Riboviria</taxon>
        <taxon>Orthornavirae</taxon>
        <taxon>Pisuviricota</taxon>
        <taxon>Pisoniviricetes</taxon>
        <taxon>Picornavirales</taxon>
        <taxon>Caliciviridae</taxon>
        <taxon>Sapovirus</taxon>
        <taxon>Sapporo virus</taxon>
    </lineage>
</organism>
<reference key="1">
    <citation type="journal article" date="1999" name="J. Virol.">
        <title>Molecular characterization of a porcine enteric calicivirus genetically related to Sapporo-like human caliciviruses.</title>
        <authorList>
            <person name="Guo M."/>
            <person name="Chang K.O."/>
            <person name="Hardy M.E."/>
            <person name="Zhang Q."/>
            <person name="Parwani A.V."/>
            <person name="Saif L.J."/>
        </authorList>
    </citation>
    <scope>NUCLEOTIDE SEQUENCE [GENOMIC RNA]</scope>
</reference>
<organismHost>
    <name type="scientific">Sus scrofa</name>
    <name type="common">Pig</name>
    <dbReference type="NCBI Taxonomy" id="9823"/>
</organismHost>